<proteinExistence type="inferred from homology"/>
<gene>
    <name type="ordered locus">M6_Spy0559</name>
</gene>
<reference key="1">
    <citation type="journal article" date="2004" name="J. Infect. Dis.">
        <title>Progress toward characterization of the group A Streptococcus metagenome: complete genome sequence of a macrolide-resistant serotype M6 strain.</title>
        <authorList>
            <person name="Banks D.J."/>
            <person name="Porcella S.F."/>
            <person name="Barbian K.D."/>
            <person name="Beres S.B."/>
            <person name="Philips L.E."/>
            <person name="Voyich J.M."/>
            <person name="DeLeo F.R."/>
            <person name="Martin J.M."/>
            <person name="Somerville G.A."/>
            <person name="Musser J.M."/>
        </authorList>
    </citation>
    <scope>NUCLEOTIDE SEQUENCE [LARGE SCALE GENOMIC DNA]</scope>
    <source>
        <strain>ATCC BAA-946 / MGAS10394</strain>
    </source>
</reference>
<protein>
    <recommendedName>
        <fullName evidence="1">Nucleotide-binding protein M6_Spy0559</fullName>
    </recommendedName>
</protein>
<evidence type="ECO:0000255" key="1">
    <source>
        <dbReference type="HAMAP-Rule" id="MF_00636"/>
    </source>
</evidence>
<dbReference type="EMBL" id="CP000003">
    <property type="protein sequence ID" value="AAT86694.1"/>
    <property type="molecule type" value="Genomic_DNA"/>
</dbReference>
<dbReference type="SMR" id="Q5XD19"/>
<dbReference type="KEGG" id="spa:M6_Spy0559"/>
<dbReference type="HOGENOM" id="CLU_059558_0_0_9"/>
<dbReference type="Proteomes" id="UP000001167">
    <property type="component" value="Chromosome"/>
</dbReference>
<dbReference type="GO" id="GO:0005524">
    <property type="term" value="F:ATP binding"/>
    <property type="evidence" value="ECO:0007669"/>
    <property type="project" value="UniProtKB-UniRule"/>
</dbReference>
<dbReference type="GO" id="GO:0005525">
    <property type="term" value="F:GTP binding"/>
    <property type="evidence" value="ECO:0007669"/>
    <property type="project" value="UniProtKB-UniRule"/>
</dbReference>
<dbReference type="Gene3D" id="3.40.50.300">
    <property type="entry name" value="P-loop containing nucleotide triphosphate hydrolases"/>
    <property type="match status" value="1"/>
</dbReference>
<dbReference type="HAMAP" id="MF_00636">
    <property type="entry name" value="RapZ_like"/>
    <property type="match status" value="1"/>
</dbReference>
<dbReference type="InterPro" id="IPR027417">
    <property type="entry name" value="P-loop_NTPase"/>
</dbReference>
<dbReference type="InterPro" id="IPR005337">
    <property type="entry name" value="RapZ-like"/>
</dbReference>
<dbReference type="InterPro" id="IPR053930">
    <property type="entry name" value="RapZ-like_N"/>
</dbReference>
<dbReference type="InterPro" id="IPR053931">
    <property type="entry name" value="RapZ_C"/>
</dbReference>
<dbReference type="NCBIfam" id="NF003828">
    <property type="entry name" value="PRK05416.1"/>
    <property type="match status" value="1"/>
</dbReference>
<dbReference type="PANTHER" id="PTHR30448">
    <property type="entry name" value="RNASE ADAPTER PROTEIN RAPZ"/>
    <property type="match status" value="1"/>
</dbReference>
<dbReference type="PANTHER" id="PTHR30448:SF0">
    <property type="entry name" value="RNASE ADAPTER PROTEIN RAPZ"/>
    <property type="match status" value="1"/>
</dbReference>
<dbReference type="Pfam" id="PF22740">
    <property type="entry name" value="PapZ_C"/>
    <property type="match status" value="1"/>
</dbReference>
<dbReference type="Pfam" id="PF03668">
    <property type="entry name" value="RapZ-like_N"/>
    <property type="match status" value="1"/>
</dbReference>
<dbReference type="PIRSF" id="PIRSF005052">
    <property type="entry name" value="P-loopkin"/>
    <property type="match status" value="1"/>
</dbReference>
<dbReference type="SUPFAM" id="SSF52540">
    <property type="entry name" value="P-loop containing nucleoside triphosphate hydrolases"/>
    <property type="match status" value="1"/>
</dbReference>
<feature type="chain" id="PRO_0000107774" description="Nucleotide-binding protein M6_Spy0559">
    <location>
        <begin position="1"/>
        <end position="296"/>
    </location>
</feature>
<feature type="binding site" evidence="1">
    <location>
        <begin position="13"/>
        <end position="20"/>
    </location>
    <ligand>
        <name>ATP</name>
        <dbReference type="ChEBI" id="CHEBI:30616"/>
    </ligand>
</feature>
<feature type="binding site" evidence="1">
    <location>
        <begin position="63"/>
        <end position="66"/>
    </location>
    <ligand>
        <name>GTP</name>
        <dbReference type="ChEBI" id="CHEBI:37565"/>
    </ligand>
</feature>
<organism>
    <name type="scientific">Streptococcus pyogenes serotype M6 (strain ATCC BAA-946 / MGAS10394)</name>
    <dbReference type="NCBI Taxonomy" id="286636"/>
    <lineage>
        <taxon>Bacteria</taxon>
        <taxon>Bacillati</taxon>
        <taxon>Bacillota</taxon>
        <taxon>Bacilli</taxon>
        <taxon>Lactobacillales</taxon>
        <taxon>Streptococcaceae</taxon>
        <taxon>Streptococcus</taxon>
    </lineage>
</organism>
<sequence length="296" mass="33553">MSDKHINLVIVTGMSGAGKTVAIQSFEDLGYFTIDNMPPALVPKFLELIEQTNENRRVALVVDMRSRLFFKEINSTLDSIESNPSIDFRILFLDATDGELVSRYKETRRSHPLAADGRVLDGIRLERELLSPLKSMSQHVVDTTKLTPRQLRKTISDQFSEGSNQASLRIEVMSFGFKYGLPLDADLVFDVRFLPNPYYQVELREKTGLDEDVFNYVMSHPESEVFYKHLLNLIVPILPAYQKEGKSVLTVAIGCTGGQHRSVAFAHCLAESLATDWSVNESHRDQNRRKETVNRS</sequence>
<accession>Q5XD19</accession>
<comment type="function">
    <text evidence="1">Displays ATPase and GTPase activities.</text>
</comment>
<comment type="similarity">
    <text evidence="1">Belongs to the RapZ-like family.</text>
</comment>
<keyword id="KW-0067">ATP-binding</keyword>
<keyword id="KW-0342">GTP-binding</keyword>
<keyword id="KW-0547">Nucleotide-binding</keyword>
<name>Y559_STRP6</name>